<gene>
    <name evidence="1" type="primary">pyrG</name>
    <name type="ordered locus">PHZ_c1751</name>
</gene>
<protein>
    <recommendedName>
        <fullName evidence="1">CTP synthase</fullName>
        <ecNumber evidence="1">6.3.4.2</ecNumber>
    </recommendedName>
    <alternativeName>
        <fullName evidence="1">Cytidine 5'-triphosphate synthase</fullName>
    </alternativeName>
    <alternativeName>
        <fullName evidence="1">Cytidine triphosphate synthetase</fullName>
        <shortName evidence="1">CTP synthetase</shortName>
        <shortName evidence="1">CTPS</shortName>
    </alternativeName>
    <alternativeName>
        <fullName evidence="1">UTP--ammonia ligase</fullName>
    </alternativeName>
</protein>
<sequence>MARYIFITGGVVSSLGKGLASAALGALLQARGYKVRLRKLDPYLNVDPGTMSPYQHGEVFVTDDGAETDLDLGHYERFTGVSATRADNITTGQIYKTIIEKERRGDYLGATVQVIPHVTGEIKDFVLSDPGPDVDFVLIEVGGTVGDIEGLPFFEAIRQLGQELPRGHACYIHLTLLPFIKTAGEMKTKPTQHSVKELRSIGIQPDILLCRTEFPIPEGERRKIAQFCNVRPSAVIQAMDSANIYAVPLDYHHEGLDTEVLDVFGLLDQAPKPDLTRWEEISHRLSHPDGEVNIAIVGKYTGLTDAYKSLVEALVHGGVANNVRVKFDWIEGEAFEKDEDLIAVRLANVHGVLVPGAFGERGSEGMIRAVQFAREHQIPYFGICFGMQMAMIEAARNLAGIRQASSTEFGPTSEPIVGLMTEWTRGNEKQVRAEGGELGGTMRCGAYDAVLAPGSRVAEIYGSTAIQERHRHRYEVNIGYRERIEATGLKFTGLSPDGQLPEICERADHPWFVGVQYHPELKSRPFDPHPLFASFIGAAKERSRLV</sequence>
<accession>B4RBW5</accession>
<dbReference type="EC" id="6.3.4.2" evidence="1"/>
<dbReference type="EMBL" id="CP000747">
    <property type="protein sequence ID" value="ACG78162.1"/>
    <property type="molecule type" value="Genomic_DNA"/>
</dbReference>
<dbReference type="RefSeq" id="WP_012522304.1">
    <property type="nucleotide sequence ID" value="NC_011144.1"/>
</dbReference>
<dbReference type="SMR" id="B4RBW5"/>
<dbReference type="STRING" id="450851.PHZ_c1751"/>
<dbReference type="KEGG" id="pzu:PHZ_c1751"/>
<dbReference type="eggNOG" id="COG0504">
    <property type="taxonomic scope" value="Bacteria"/>
</dbReference>
<dbReference type="HOGENOM" id="CLU_011675_5_0_5"/>
<dbReference type="OrthoDB" id="9801107at2"/>
<dbReference type="UniPathway" id="UPA00159">
    <property type="reaction ID" value="UER00277"/>
</dbReference>
<dbReference type="Proteomes" id="UP000001868">
    <property type="component" value="Chromosome"/>
</dbReference>
<dbReference type="GO" id="GO:0005829">
    <property type="term" value="C:cytosol"/>
    <property type="evidence" value="ECO:0007669"/>
    <property type="project" value="TreeGrafter"/>
</dbReference>
<dbReference type="GO" id="GO:0005524">
    <property type="term" value="F:ATP binding"/>
    <property type="evidence" value="ECO:0007669"/>
    <property type="project" value="UniProtKB-KW"/>
</dbReference>
<dbReference type="GO" id="GO:0003883">
    <property type="term" value="F:CTP synthase activity"/>
    <property type="evidence" value="ECO:0007669"/>
    <property type="project" value="UniProtKB-UniRule"/>
</dbReference>
<dbReference type="GO" id="GO:0004359">
    <property type="term" value="F:glutaminase activity"/>
    <property type="evidence" value="ECO:0007669"/>
    <property type="project" value="RHEA"/>
</dbReference>
<dbReference type="GO" id="GO:0042802">
    <property type="term" value="F:identical protein binding"/>
    <property type="evidence" value="ECO:0007669"/>
    <property type="project" value="TreeGrafter"/>
</dbReference>
<dbReference type="GO" id="GO:0046872">
    <property type="term" value="F:metal ion binding"/>
    <property type="evidence" value="ECO:0007669"/>
    <property type="project" value="UniProtKB-KW"/>
</dbReference>
<dbReference type="GO" id="GO:0044210">
    <property type="term" value="P:'de novo' CTP biosynthetic process"/>
    <property type="evidence" value="ECO:0007669"/>
    <property type="project" value="UniProtKB-UniRule"/>
</dbReference>
<dbReference type="GO" id="GO:0019856">
    <property type="term" value="P:pyrimidine nucleobase biosynthetic process"/>
    <property type="evidence" value="ECO:0007669"/>
    <property type="project" value="TreeGrafter"/>
</dbReference>
<dbReference type="CDD" id="cd03113">
    <property type="entry name" value="CTPS_N"/>
    <property type="match status" value="1"/>
</dbReference>
<dbReference type="CDD" id="cd01746">
    <property type="entry name" value="GATase1_CTP_Synthase"/>
    <property type="match status" value="1"/>
</dbReference>
<dbReference type="FunFam" id="3.40.50.300:FF:000009">
    <property type="entry name" value="CTP synthase"/>
    <property type="match status" value="1"/>
</dbReference>
<dbReference type="FunFam" id="3.40.50.880:FF:000002">
    <property type="entry name" value="CTP synthase"/>
    <property type="match status" value="1"/>
</dbReference>
<dbReference type="Gene3D" id="3.40.50.880">
    <property type="match status" value="1"/>
</dbReference>
<dbReference type="Gene3D" id="3.40.50.300">
    <property type="entry name" value="P-loop containing nucleotide triphosphate hydrolases"/>
    <property type="match status" value="1"/>
</dbReference>
<dbReference type="HAMAP" id="MF_01227">
    <property type="entry name" value="PyrG"/>
    <property type="match status" value="1"/>
</dbReference>
<dbReference type="InterPro" id="IPR029062">
    <property type="entry name" value="Class_I_gatase-like"/>
</dbReference>
<dbReference type="InterPro" id="IPR004468">
    <property type="entry name" value="CTP_synthase"/>
</dbReference>
<dbReference type="InterPro" id="IPR017456">
    <property type="entry name" value="CTP_synthase_N"/>
</dbReference>
<dbReference type="InterPro" id="IPR017926">
    <property type="entry name" value="GATASE"/>
</dbReference>
<dbReference type="InterPro" id="IPR033828">
    <property type="entry name" value="GATase1_CTP_Synthase"/>
</dbReference>
<dbReference type="InterPro" id="IPR027417">
    <property type="entry name" value="P-loop_NTPase"/>
</dbReference>
<dbReference type="NCBIfam" id="NF003792">
    <property type="entry name" value="PRK05380.1"/>
    <property type="match status" value="1"/>
</dbReference>
<dbReference type="NCBIfam" id="TIGR00337">
    <property type="entry name" value="PyrG"/>
    <property type="match status" value="1"/>
</dbReference>
<dbReference type="PANTHER" id="PTHR11550">
    <property type="entry name" value="CTP SYNTHASE"/>
    <property type="match status" value="1"/>
</dbReference>
<dbReference type="PANTHER" id="PTHR11550:SF0">
    <property type="entry name" value="CTP SYNTHASE-RELATED"/>
    <property type="match status" value="1"/>
</dbReference>
<dbReference type="Pfam" id="PF06418">
    <property type="entry name" value="CTP_synth_N"/>
    <property type="match status" value="1"/>
</dbReference>
<dbReference type="Pfam" id="PF00117">
    <property type="entry name" value="GATase"/>
    <property type="match status" value="1"/>
</dbReference>
<dbReference type="SUPFAM" id="SSF52317">
    <property type="entry name" value="Class I glutamine amidotransferase-like"/>
    <property type="match status" value="1"/>
</dbReference>
<dbReference type="SUPFAM" id="SSF52540">
    <property type="entry name" value="P-loop containing nucleoside triphosphate hydrolases"/>
    <property type="match status" value="1"/>
</dbReference>
<dbReference type="PROSITE" id="PS51273">
    <property type="entry name" value="GATASE_TYPE_1"/>
    <property type="match status" value="1"/>
</dbReference>
<proteinExistence type="inferred from homology"/>
<organism>
    <name type="scientific">Phenylobacterium zucineum (strain HLK1)</name>
    <dbReference type="NCBI Taxonomy" id="450851"/>
    <lineage>
        <taxon>Bacteria</taxon>
        <taxon>Pseudomonadati</taxon>
        <taxon>Pseudomonadota</taxon>
        <taxon>Alphaproteobacteria</taxon>
        <taxon>Caulobacterales</taxon>
        <taxon>Caulobacteraceae</taxon>
        <taxon>Phenylobacterium</taxon>
    </lineage>
</organism>
<evidence type="ECO:0000255" key="1">
    <source>
        <dbReference type="HAMAP-Rule" id="MF_01227"/>
    </source>
</evidence>
<reference key="1">
    <citation type="journal article" date="2008" name="BMC Genomics">
        <title>Complete genome of Phenylobacterium zucineum - a novel facultative intracellular bacterium isolated from human erythroleukemia cell line K562.</title>
        <authorList>
            <person name="Luo Y."/>
            <person name="Xu X."/>
            <person name="Ding Z."/>
            <person name="Liu Z."/>
            <person name="Zhang B."/>
            <person name="Yan Z."/>
            <person name="Sun J."/>
            <person name="Hu S."/>
            <person name="Hu X."/>
        </authorList>
    </citation>
    <scope>NUCLEOTIDE SEQUENCE [LARGE SCALE GENOMIC DNA]</scope>
    <source>
        <strain>HLK1</strain>
    </source>
</reference>
<keyword id="KW-0067">ATP-binding</keyword>
<keyword id="KW-0315">Glutamine amidotransferase</keyword>
<keyword id="KW-0436">Ligase</keyword>
<keyword id="KW-0460">Magnesium</keyword>
<keyword id="KW-0479">Metal-binding</keyword>
<keyword id="KW-0547">Nucleotide-binding</keyword>
<keyword id="KW-0665">Pyrimidine biosynthesis</keyword>
<keyword id="KW-1185">Reference proteome</keyword>
<comment type="function">
    <text evidence="1">Catalyzes the ATP-dependent amination of UTP to CTP with either L-glutamine or ammonia as the source of nitrogen. Regulates intracellular CTP levels through interactions with the four ribonucleotide triphosphates.</text>
</comment>
<comment type="catalytic activity">
    <reaction evidence="1">
        <text>UTP + L-glutamine + ATP + H2O = CTP + L-glutamate + ADP + phosphate + 2 H(+)</text>
        <dbReference type="Rhea" id="RHEA:26426"/>
        <dbReference type="ChEBI" id="CHEBI:15377"/>
        <dbReference type="ChEBI" id="CHEBI:15378"/>
        <dbReference type="ChEBI" id="CHEBI:29985"/>
        <dbReference type="ChEBI" id="CHEBI:30616"/>
        <dbReference type="ChEBI" id="CHEBI:37563"/>
        <dbReference type="ChEBI" id="CHEBI:43474"/>
        <dbReference type="ChEBI" id="CHEBI:46398"/>
        <dbReference type="ChEBI" id="CHEBI:58359"/>
        <dbReference type="ChEBI" id="CHEBI:456216"/>
        <dbReference type="EC" id="6.3.4.2"/>
    </reaction>
</comment>
<comment type="catalytic activity">
    <reaction evidence="1">
        <text>L-glutamine + H2O = L-glutamate + NH4(+)</text>
        <dbReference type="Rhea" id="RHEA:15889"/>
        <dbReference type="ChEBI" id="CHEBI:15377"/>
        <dbReference type="ChEBI" id="CHEBI:28938"/>
        <dbReference type="ChEBI" id="CHEBI:29985"/>
        <dbReference type="ChEBI" id="CHEBI:58359"/>
    </reaction>
</comment>
<comment type="catalytic activity">
    <reaction evidence="1">
        <text>UTP + NH4(+) + ATP = CTP + ADP + phosphate + 2 H(+)</text>
        <dbReference type="Rhea" id="RHEA:16597"/>
        <dbReference type="ChEBI" id="CHEBI:15378"/>
        <dbReference type="ChEBI" id="CHEBI:28938"/>
        <dbReference type="ChEBI" id="CHEBI:30616"/>
        <dbReference type="ChEBI" id="CHEBI:37563"/>
        <dbReference type="ChEBI" id="CHEBI:43474"/>
        <dbReference type="ChEBI" id="CHEBI:46398"/>
        <dbReference type="ChEBI" id="CHEBI:456216"/>
    </reaction>
</comment>
<comment type="activity regulation">
    <text evidence="1">Allosterically activated by GTP, when glutamine is the substrate; GTP has no effect on the reaction when ammonia is the substrate. The allosteric effector GTP functions by stabilizing the protein conformation that binds the tetrahedral intermediate(s) formed during glutamine hydrolysis. Inhibited by the product CTP, via allosteric rather than competitive inhibition.</text>
</comment>
<comment type="pathway">
    <text evidence="1">Pyrimidine metabolism; CTP biosynthesis via de novo pathway; CTP from UDP: step 2/2.</text>
</comment>
<comment type="subunit">
    <text evidence="1">Homotetramer.</text>
</comment>
<comment type="miscellaneous">
    <text evidence="1">CTPSs have evolved a hybrid strategy for distinguishing between UTP and CTP. The overlapping regions of the product feedback inhibitory and substrate sites recognize a common feature in both compounds, the triphosphate moiety. To differentiate isosteric substrate and product pyrimidine rings, an additional pocket far from the expected kinase/ligase catalytic site, specifically recognizes the cytosine and ribose portions of the product inhibitor.</text>
</comment>
<comment type="similarity">
    <text evidence="1">Belongs to the CTP synthase family.</text>
</comment>
<name>PYRG_PHEZH</name>
<feature type="chain" id="PRO_1000139514" description="CTP synthase">
    <location>
        <begin position="1"/>
        <end position="546"/>
    </location>
</feature>
<feature type="domain" description="Glutamine amidotransferase type-1" evidence="1">
    <location>
        <begin position="293"/>
        <end position="545"/>
    </location>
</feature>
<feature type="region of interest" description="Amidoligase domain" evidence="1">
    <location>
        <begin position="1"/>
        <end position="266"/>
    </location>
</feature>
<feature type="active site" description="Nucleophile; for glutamine hydrolysis" evidence="1">
    <location>
        <position position="384"/>
    </location>
</feature>
<feature type="active site" evidence="1">
    <location>
        <position position="518"/>
    </location>
</feature>
<feature type="active site" evidence="1">
    <location>
        <position position="520"/>
    </location>
</feature>
<feature type="binding site" evidence="1">
    <location>
        <position position="13"/>
    </location>
    <ligand>
        <name>CTP</name>
        <dbReference type="ChEBI" id="CHEBI:37563"/>
        <note>allosteric inhibitor</note>
    </ligand>
</feature>
<feature type="binding site" evidence="1">
    <location>
        <position position="13"/>
    </location>
    <ligand>
        <name>UTP</name>
        <dbReference type="ChEBI" id="CHEBI:46398"/>
    </ligand>
</feature>
<feature type="binding site" evidence="1">
    <location>
        <begin position="14"/>
        <end position="19"/>
    </location>
    <ligand>
        <name>ATP</name>
        <dbReference type="ChEBI" id="CHEBI:30616"/>
    </ligand>
</feature>
<feature type="binding site" evidence="1">
    <location>
        <position position="54"/>
    </location>
    <ligand>
        <name>L-glutamine</name>
        <dbReference type="ChEBI" id="CHEBI:58359"/>
    </ligand>
</feature>
<feature type="binding site" evidence="1">
    <location>
        <position position="71"/>
    </location>
    <ligand>
        <name>ATP</name>
        <dbReference type="ChEBI" id="CHEBI:30616"/>
    </ligand>
</feature>
<feature type="binding site" evidence="1">
    <location>
        <position position="71"/>
    </location>
    <ligand>
        <name>Mg(2+)</name>
        <dbReference type="ChEBI" id="CHEBI:18420"/>
    </ligand>
</feature>
<feature type="binding site" evidence="1">
    <location>
        <position position="140"/>
    </location>
    <ligand>
        <name>Mg(2+)</name>
        <dbReference type="ChEBI" id="CHEBI:18420"/>
    </ligand>
</feature>
<feature type="binding site" evidence="1">
    <location>
        <begin position="147"/>
        <end position="149"/>
    </location>
    <ligand>
        <name>CTP</name>
        <dbReference type="ChEBI" id="CHEBI:37563"/>
        <note>allosteric inhibitor</note>
    </ligand>
</feature>
<feature type="binding site" evidence="1">
    <location>
        <begin position="187"/>
        <end position="192"/>
    </location>
    <ligand>
        <name>CTP</name>
        <dbReference type="ChEBI" id="CHEBI:37563"/>
        <note>allosteric inhibitor</note>
    </ligand>
</feature>
<feature type="binding site" evidence="1">
    <location>
        <begin position="187"/>
        <end position="192"/>
    </location>
    <ligand>
        <name>UTP</name>
        <dbReference type="ChEBI" id="CHEBI:46398"/>
    </ligand>
</feature>
<feature type="binding site" evidence="1">
    <location>
        <position position="223"/>
    </location>
    <ligand>
        <name>CTP</name>
        <dbReference type="ChEBI" id="CHEBI:37563"/>
        <note>allosteric inhibitor</note>
    </ligand>
</feature>
<feature type="binding site" evidence="1">
    <location>
        <position position="223"/>
    </location>
    <ligand>
        <name>UTP</name>
        <dbReference type="ChEBI" id="CHEBI:46398"/>
    </ligand>
</feature>
<feature type="binding site" evidence="1">
    <location>
        <position position="357"/>
    </location>
    <ligand>
        <name>L-glutamine</name>
        <dbReference type="ChEBI" id="CHEBI:58359"/>
    </ligand>
</feature>
<feature type="binding site" evidence="1">
    <location>
        <begin position="385"/>
        <end position="388"/>
    </location>
    <ligand>
        <name>L-glutamine</name>
        <dbReference type="ChEBI" id="CHEBI:58359"/>
    </ligand>
</feature>
<feature type="binding site" evidence="1">
    <location>
        <position position="408"/>
    </location>
    <ligand>
        <name>L-glutamine</name>
        <dbReference type="ChEBI" id="CHEBI:58359"/>
    </ligand>
</feature>
<feature type="binding site" evidence="1">
    <location>
        <position position="473"/>
    </location>
    <ligand>
        <name>L-glutamine</name>
        <dbReference type="ChEBI" id="CHEBI:58359"/>
    </ligand>
</feature>